<protein>
    <recommendedName>
        <fullName evidence="5">CCHC-type zinc finger nucleic acid binding protein</fullName>
    </recommendedName>
    <alternativeName>
        <fullName evidence="5">Cellular nucleic acid-binding protein</fullName>
        <shortName evidence="5">CNBP</shortName>
    </alternativeName>
    <alternativeName>
        <fullName>Zinc finger protein 9</fullName>
    </alternativeName>
</protein>
<keyword id="KW-0007">Acetylation</keyword>
<keyword id="KW-0963">Cytoplasm</keyword>
<keyword id="KW-0238">DNA-binding</keyword>
<keyword id="KW-0256">Endoplasmic reticulum</keyword>
<keyword id="KW-0479">Metal-binding</keyword>
<keyword id="KW-0488">Methylation</keyword>
<keyword id="KW-0539">Nucleus</keyword>
<keyword id="KW-0597">Phosphoprotein</keyword>
<keyword id="KW-1185">Reference proteome</keyword>
<keyword id="KW-0677">Repeat</keyword>
<keyword id="KW-0678">Repressor</keyword>
<keyword id="KW-0804">Transcription</keyword>
<keyword id="KW-0805">Transcription regulation</keyword>
<keyword id="KW-0862">Zinc</keyword>
<keyword id="KW-0863">Zinc-finger</keyword>
<accession>Q3T0Q6</accession>
<reference key="1">
    <citation type="submission" date="2005-08" db="EMBL/GenBank/DDBJ databases">
        <authorList>
            <consortium name="NIH - Mammalian Gene Collection (MGC) project"/>
        </authorList>
    </citation>
    <scope>NUCLEOTIDE SEQUENCE [LARGE SCALE MRNA]</scope>
    <source>
        <strain>Crossbred X Angus</strain>
        <tissue>Ileum</tissue>
    </source>
</reference>
<feature type="initiator methionine" description="Removed" evidence="2">
    <location>
        <position position="1"/>
    </location>
</feature>
<feature type="chain" id="PRO_0000247013" description="CCHC-type zinc finger nucleic acid binding protein">
    <location>
        <begin position="2"/>
        <end position="170"/>
    </location>
</feature>
<feature type="zinc finger region" description="CCHC-type 1" evidence="4">
    <location>
        <begin position="4"/>
        <end position="21"/>
    </location>
</feature>
<feature type="zinc finger region" description="CCHC-type 2" evidence="4">
    <location>
        <begin position="45"/>
        <end position="62"/>
    </location>
</feature>
<feature type="zinc finger region" description="CCHC-type 3" evidence="4">
    <location>
        <begin position="65"/>
        <end position="82"/>
    </location>
</feature>
<feature type="zinc finger region" description="CCHC-type 4" evidence="4">
    <location>
        <begin position="89"/>
        <end position="106"/>
    </location>
</feature>
<feature type="zinc finger region" description="CCHC-type 5" evidence="4">
    <location>
        <begin position="110"/>
        <end position="127"/>
    </location>
</feature>
<feature type="zinc finger region" description="CCHC-type 6" evidence="4">
    <location>
        <begin position="128"/>
        <end position="145"/>
    </location>
</feature>
<feature type="zinc finger region" description="CCHC-type 7" evidence="4">
    <location>
        <begin position="149"/>
        <end position="166"/>
    </location>
</feature>
<feature type="region of interest" description="RNA-binding Arg/Gly-rich region (RGG-box)" evidence="2">
    <location>
        <begin position="25"/>
        <end position="33"/>
    </location>
</feature>
<feature type="modified residue" description="N-acetylserine" evidence="2">
    <location>
        <position position="2"/>
    </location>
</feature>
<feature type="modified residue" description="N6-acetyllysine" evidence="1">
    <location>
        <position position="8"/>
    </location>
</feature>
<feature type="modified residue" description="Omega-N-methylarginine; by PRMT1" evidence="2">
    <location>
        <position position="25"/>
    </location>
</feature>
<feature type="modified residue" description="Omega-N-methylarginine; by PRMT1" evidence="2">
    <location>
        <position position="27"/>
    </location>
</feature>
<feature type="modified residue" description="Phosphoserine" evidence="1">
    <location>
        <position position="42"/>
    </location>
</feature>
<feature type="modified residue" description="Omega-N-methylarginine" evidence="2">
    <location>
        <position position="72"/>
    </location>
</feature>
<sequence>MSSNECFKCGRSGHWARECPTGGGRGRGMRSRGRGFQFVSSSLPDICYRCGESGHLAKDCDLQEDACYNCGRGGHIAKDCKEPKREREQCCYNCGKPGHLARDCDHADEQKCYSCGEFGHIQKDCTKVKCYRCGETGHVAINCSKTSEVNCYRCGESGHLARECTIEATA</sequence>
<gene>
    <name type="primary">CNBP</name>
    <name type="synonym">ZNF9</name>
</gene>
<evidence type="ECO:0000250" key="1">
    <source>
        <dbReference type="UniProtKB" id="P53996"/>
    </source>
</evidence>
<evidence type="ECO:0000250" key="2">
    <source>
        <dbReference type="UniProtKB" id="P62633"/>
    </source>
</evidence>
<evidence type="ECO:0000250" key="3">
    <source>
        <dbReference type="UniProtKB" id="P62634"/>
    </source>
</evidence>
<evidence type="ECO:0000255" key="4">
    <source>
        <dbReference type="PROSITE-ProRule" id="PRU00047"/>
    </source>
</evidence>
<evidence type="ECO:0000305" key="5"/>
<name>CNBP_BOVIN</name>
<organism>
    <name type="scientific">Bos taurus</name>
    <name type="common">Bovine</name>
    <dbReference type="NCBI Taxonomy" id="9913"/>
    <lineage>
        <taxon>Eukaryota</taxon>
        <taxon>Metazoa</taxon>
        <taxon>Chordata</taxon>
        <taxon>Craniata</taxon>
        <taxon>Vertebrata</taxon>
        <taxon>Euteleostomi</taxon>
        <taxon>Mammalia</taxon>
        <taxon>Eutheria</taxon>
        <taxon>Laurasiatheria</taxon>
        <taxon>Artiodactyla</taxon>
        <taxon>Ruminantia</taxon>
        <taxon>Pecora</taxon>
        <taxon>Bovidae</taxon>
        <taxon>Bovinae</taxon>
        <taxon>Bos</taxon>
    </lineage>
</organism>
<proteinExistence type="evidence at transcript level"/>
<comment type="function">
    <text evidence="1 2 3">Single-stranded DNA-binding protein that preferentially binds to the sterol regulatory element (SRE) sequence 5'-GTGCGGTG-3', and thereby mediates transcriptional repression (By similarity). Has a role as transactivator of the Myc promoter (By similarity). Binds single-stranded RNA in a sequence-specific manner (By similarity). Binds G-rich elements in target mRNA coding sequences (By similarity). Prevents G-quadruplex structure formation in vitro, suggesting a role in supporting translation by resolving stable structures on mRNAs (By similarity).</text>
</comment>
<comment type="subunit">
    <text evidence="2">Associates with the 40S ribosomal subunit, the 80S ribosome and with polysomes.</text>
</comment>
<comment type="subcellular location">
    <subcellularLocation>
        <location evidence="1">Nucleus</location>
    </subcellularLocation>
    <subcellularLocation>
        <location evidence="2">Cytoplasm</location>
    </subcellularLocation>
    <subcellularLocation>
        <location evidence="1">Endoplasmic reticulum</location>
    </subcellularLocation>
</comment>
<comment type="PTM">
    <text evidence="2">Arginine methylation by PRMT1 in the Arg/Gly-rich region impedes RNA binding.</text>
</comment>
<dbReference type="EMBL" id="BC102298">
    <property type="protein sequence ID" value="AAI02299.1"/>
    <property type="molecule type" value="mRNA"/>
</dbReference>
<dbReference type="RefSeq" id="NP_001029396.1">
    <property type="nucleotide sequence ID" value="NM_001034224.2"/>
</dbReference>
<dbReference type="RefSeq" id="XP_024838219.1">
    <property type="nucleotide sequence ID" value="XM_024982451.2"/>
</dbReference>
<dbReference type="FunCoup" id="Q3T0Q6">
    <property type="interactions" value="1950"/>
</dbReference>
<dbReference type="STRING" id="9913.ENSBTAP00000016130"/>
<dbReference type="PaxDb" id="9913-ENSBTAP00000016130"/>
<dbReference type="GeneID" id="504831"/>
<dbReference type="KEGG" id="bta:504831"/>
<dbReference type="CTD" id="7555"/>
<dbReference type="VEuPathDB" id="HostDB:ENSBTAG00000012159"/>
<dbReference type="eggNOG" id="KOG4400">
    <property type="taxonomic scope" value="Eukaryota"/>
</dbReference>
<dbReference type="HOGENOM" id="CLU_058879_4_0_1"/>
<dbReference type="InParanoid" id="Q3T0Q6"/>
<dbReference type="OMA" id="KGNPTCY"/>
<dbReference type="OrthoDB" id="427960at2759"/>
<dbReference type="TreeFam" id="TF316974"/>
<dbReference type="Proteomes" id="UP000009136">
    <property type="component" value="Chromosome 22"/>
</dbReference>
<dbReference type="Bgee" id="ENSBTAG00000012159">
    <property type="expression patterns" value="Expressed in semitendinosus and 106 other cell types or tissues"/>
</dbReference>
<dbReference type="GO" id="GO:0005737">
    <property type="term" value="C:cytoplasm"/>
    <property type="evidence" value="ECO:0000318"/>
    <property type="project" value="GO_Central"/>
</dbReference>
<dbReference type="GO" id="GO:0005783">
    <property type="term" value="C:endoplasmic reticulum"/>
    <property type="evidence" value="ECO:0007669"/>
    <property type="project" value="UniProtKB-SubCell"/>
</dbReference>
<dbReference type="GO" id="GO:0005634">
    <property type="term" value="C:nucleus"/>
    <property type="evidence" value="ECO:0007669"/>
    <property type="project" value="UniProtKB-SubCell"/>
</dbReference>
<dbReference type="GO" id="GO:0003677">
    <property type="term" value="F:DNA binding"/>
    <property type="evidence" value="ECO:0007669"/>
    <property type="project" value="UniProtKB-KW"/>
</dbReference>
<dbReference type="GO" id="GO:0003729">
    <property type="term" value="F:mRNA binding"/>
    <property type="evidence" value="ECO:0000318"/>
    <property type="project" value="GO_Central"/>
</dbReference>
<dbReference type="GO" id="GO:0003727">
    <property type="term" value="F:single-stranded RNA binding"/>
    <property type="evidence" value="ECO:0000318"/>
    <property type="project" value="GO_Central"/>
</dbReference>
<dbReference type="GO" id="GO:0045182">
    <property type="term" value="F:translation regulator activity"/>
    <property type="evidence" value="ECO:0000318"/>
    <property type="project" value="GO_Central"/>
</dbReference>
<dbReference type="GO" id="GO:0008270">
    <property type="term" value="F:zinc ion binding"/>
    <property type="evidence" value="ECO:0007669"/>
    <property type="project" value="UniProtKB-KW"/>
</dbReference>
<dbReference type="GO" id="GO:2000767">
    <property type="term" value="P:positive regulation of cytoplasmic translation"/>
    <property type="evidence" value="ECO:0000318"/>
    <property type="project" value="GO_Central"/>
</dbReference>
<dbReference type="FunFam" id="4.10.60.10:FF:000002">
    <property type="entry name" value="cellular nucleic acid-binding protein-like isoform X1"/>
    <property type="match status" value="2"/>
</dbReference>
<dbReference type="FunFam" id="4.10.60.10:FF:000006">
    <property type="entry name" value="cellular nucleic acid-binding protein-like isoform X1"/>
    <property type="match status" value="1"/>
</dbReference>
<dbReference type="FunFam" id="4.10.60.10:FF:000026">
    <property type="entry name" value="cellular nucleic acid-binding protein-like isoform X1"/>
    <property type="match status" value="1"/>
</dbReference>
<dbReference type="Gene3D" id="4.10.60.10">
    <property type="entry name" value="Zinc finger, CCHC-type"/>
    <property type="match status" value="5"/>
</dbReference>
<dbReference type="InterPro" id="IPR001878">
    <property type="entry name" value="Znf_CCHC"/>
</dbReference>
<dbReference type="InterPro" id="IPR036875">
    <property type="entry name" value="Znf_CCHC_sf"/>
</dbReference>
<dbReference type="PANTHER" id="PTHR47103">
    <property type="entry name" value="DNA-BINDING PROTEIN"/>
    <property type="match status" value="1"/>
</dbReference>
<dbReference type="PANTHER" id="PTHR47103:SF8">
    <property type="entry name" value="DNA-BINDING PROTEIN"/>
    <property type="match status" value="1"/>
</dbReference>
<dbReference type="Pfam" id="PF00098">
    <property type="entry name" value="zf-CCHC"/>
    <property type="match status" value="7"/>
</dbReference>
<dbReference type="SMART" id="SM00343">
    <property type="entry name" value="ZnF_C2HC"/>
    <property type="match status" value="7"/>
</dbReference>
<dbReference type="SUPFAM" id="SSF57756">
    <property type="entry name" value="Retrovirus zinc finger-like domains"/>
    <property type="match status" value="4"/>
</dbReference>
<dbReference type="PROSITE" id="PS50158">
    <property type="entry name" value="ZF_CCHC"/>
    <property type="match status" value="7"/>
</dbReference>